<dbReference type="EMBL" id="CP000962">
    <property type="protein sequence ID" value="ACA53987.1"/>
    <property type="molecule type" value="Genomic_DNA"/>
</dbReference>
<dbReference type="RefSeq" id="WP_003495012.1">
    <property type="nucleotide sequence ID" value="NC_010520.1"/>
</dbReference>
<dbReference type="SMR" id="B1KYF3"/>
<dbReference type="KEGG" id="cbl:CLK_2122"/>
<dbReference type="HOGENOM" id="CLU_164837_0_1_9"/>
<dbReference type="GO" id="GO:0005829">
    <property type="term" value="C:cytosol"/>
    <property type="evidence" value="ECO:0007669"/>
    <property type="project" value="TreeGrafter"/>
</dbReference>
<dbReference type="GO" id="GO:0048027">
    <property type="term" value="F:mRNA 5'-UTR binding"/>
    <property type="evidence" value="ECO:0007669"/>
    <property type="project" value="UniProtKB-UniRule"/>
</dbReference>
<dbReference type="GO" id="GO:0044781">
    <property type="term" value="P:bacterial-type flagellum organization"/>
    <property type="evidence" value="ECO:0007669"/>
    <property type="project" value="UniProtKB-KW"/>
</dbReference>
<dbReference type="GO" id="GO:0006402">
    <property type="term" value="P:mRNA catabolic process"/>
    <property type="evidence" value="ECO:0007669"/>
    <property type="project" value="InterPro"/>
</dbReference>
<dbReference type="GO" id="GO:0045947">
    <property type="term" value="P:negative regulation of translational initiation"/>
    <property type="evidence" value="ECO:0007669"/>
    <property type="project" value="UniProtKB-UniRule"/>
</dbReference>
<dbReference type="GO" id="GO:1902208">
    <property type="term" value="P:regulation of bacterial-type flagellum assembly"/>
    <property type="evidence" value="ECO:0007669"/>
    <property type="project" value="UniProtKB-UniRule"/>
</dbReference>
<dbReference type="GO" id="GO:0006109">
    <property type="term" value="P:regulation of carbohydrate metabolic process"/>
    <property type="evidence" value="ECO:0007669"/>
    <property type="project" value="InterPro"/>
</dbReference>
<dbReference type="FunFam" id="2.60.40.4380:FF:000002">
    <property type="entry name" value="Translational regulator CsrA"/>
    <property type="match status" value="1"/>
</dbReference>
<dbReference type="Gene3D" id="2.60.40.4380">
    <property type="entry name" value="Translational regulator CsrA"/>
    <property type="match status" value="1"/>
</dbReference>
<dbReference type="HAMAP" id="MF_00167">
    <property type="entry name" value="CsrA"/>
    <property type="match status" value="1"/>
</dbReference>
<dbReference type="InterPro" id="IPR003751">
    <property type="entry name" value="CsrA"/>
</dbReference>
<dbReference type="InterPro" id="IPR036107">
    <property type="entry name" value="CsrA_sf"/>
</dbReference>
<dbReference type="NCBIfam" id="TIGR00202">
    <property type="entry name" value="csrA"/>
    <property type="match status" value="1"/>
</dbReference>
<dbReference type="NCBIfam" id="NF002469">
    <property type="entry name" value="PRK01712.1"/>
    <property type="match status" value="1"/>
</dbReference>
<dbReference type="PANTHER" id="PTHR34984">
    <property type="entry name" value="CARBON STORAGE REGULATOR"/>
    <property type="match status" value="1"/>
</dbReference>
<dbReference type="PANTHER" id="PTHR34984:SF1">
    <property type="entry name" value="CARBON STORAGE REGULATOR"/>
    <property type="match status" value="1"/>
</dbReference>
<dbReference type="Pfam" id="PF02599">
    <property type="entry name" value="CsrA"/>
    <property type="match status" value="1"/>
</dbReference>
<dbReference type="SUPFAM" id="SSF117130">
    <property type="entry name" value="CsrA-like"/>
    <property type="match status" value="1"/>
</dbReference>
<accession>B1KYF3</accession>
<feature type="chain" id="PRO_1000097487" description="Translational regulator CsrA">
    <location>
        <begin position="1"/>
        <end position="72"/>
    </location>
</feature>
<proteinExistence type="inferred from homology"/>
<comment type="function">
    <text evidence="1">A translational regulator that binds mRNA to regulate translation initiation and/or mRNA stability. Usually binds in the 5'-UTR at or near the Shine-Dalgarno sequence preventing ribosome-binding, thus repressing translation. Its main target seems to be the major flagellin gene, while its function is anatagonized by FliW.</text>
</comment>
<comment type="subunit">
    <text evidence="1">Homodimer; the beta-strands of each monomer intercalate to form a hydrophobic core, while the alpha-helices form wings that extend away from the core.</text>
</comment>
<comment type="subcellular location">
    <subcellularLocation>
        <location evidence="1">Cytoplasm</location>
    </subcellularLocation>
</comment>
<comment type="similarity">
    <text evidence="1">Belongs to the CsrA/RsmA family.</text>
</comment>
<protein>
    <recommendedName>
        <fullName evidence="1">Translational regulator CsrA</fullName>
    </recommendedName>
</protein>
<evidence type="ECO:0000255" key="1">
    <source>
        <dbReference type="HAMAP-Rule" id="MF_00167"/>
    </source>
</evidence>
<keyword id="KW-1005">Bacterial flagellum biogenesis</keyword>
<keyword id="KW-0963">Cytoplasm</keyword>
<keyword id="KW-0678">Repressor</keyword>
<keyword id="KW-0694">RNA-binding</keyword>
<keyword id="KW-0810">Translation regulation</keyword>
<sequence length="72" mass="8144">MLVITRKKGESFLIGDDIEITVVKLDDGSVKLAIDAPKKLTILRKELYNEVQEENKKATNFNPSILKNIKSK</sequence>
<organism>
    <name type="scientific">Clostridium botulinum (strain Loch Maree / Type A3)</name>
    <dbReference type="NCBI Taxonomy" id="498214"/>
    <lineage>
        <taxon>Bacteria</taxon>
        <taxon>Bacillati</taxon>
        <taxon>Bacillota</taxon>
        <taxon>Clostridia</taxon>
        <taxon>Eubacteriales</taxon>
        <taxon>Clostridiaceae</taxon>
        <taxon>Clostridium</taxon>
    </lineage>
</organism>
<gene>
    <name evidence="1" type="primary">csrA</name>
    <name type="ordered locus">CLK_2122</name>
</gene>
<name>CSRA_CLOBM</name>
<reference key="1">
    <citation type="journal article" date="2007" name="PLoS ONE">
        <title>Analysis of the neurotoxin complex genes in Clostridium botulinum A1-A4 and B1 strains: BoNT/A3, /Ba4 and /B1 clusters are located within plasmids.</title>
        <authorList>
            <person name="Smith T.J."/>
            <person name="Hill K.K."/>
            <person name="Foley B.T."/>
            <person name="Detter J.C."/>
            <person name="Munk A.C."/>
            <person name="Bruce D.C."/>
            <person name="Doggett N.A."/>
            <person name="Smith L.A."/>
            <person name="Marks J.D."/>
            <person name="Xie G."/>
            <person name="Brettin T.S."/>
        </authorList>
    </citation>
    <scope>NUCLEOTIDE SEQUENCE [LARGE SCALE GENOMIC DNA]</scope>
    <source>
        <strain>Loch Maree / Type A3</strain>
    </source>
</reference>